<accession>C6DE13</accession>
<gene>
    <name evidence="1" type="primary">rpsR</name>
    <name type="ordered locus">PC1_3433</name>
</gene>
<reference key="1">
    <citation type="submission" date="2009-07" db="EMBL/GenBank/DDBJ databases">
        <title>Complete sequence of Pectobacterium carotovorum subsp. carotovorum PC1.</title>
        <authorList>
            <consortium name="US DOE Joint Genome Institute"/>
            <person name="Lucas S."/>
            <person name="Copeland A."/>
            <person name="Lapidus A."/>
            <person name="Glavina del Rio T."/>
            <person name="Tice H."/>
            <person name="Bruce D."/>
            <person name="Goodwin L."/>
            <person name="Pitluck S."/>
            <person name="Munk A.C."/>
            <person name="Brettin T."/>
            <person name="Detter J.C."/>
            <person name="Han C."/>
            <person name="Tapia R."/>
            <person name="Larimer F."/>
            <person name="Land M."/>
            <person name="Hauser L."/>
            <person name="Kyrpides N."/>
            <person name="Mikhailova N."/>
            <person name="Balakrishnan V."/>
            <person name="Glasner J."/>
            <person name="Perna N.T."/>
        </authorList>
    </citation>
    <scope>NUCLEOTIDE SEQUENCE [LARGE SCALE GENOMIC DNA]</scope>
    <source>
        <strain>PC1</strain>
    </source>
</reference>
<comment type="function">
    <text evidence="1">Binds as a heterodimer with protein bS6 to the central domain of the 16S rRNA, where it helps stabilize the platform of the 30S subunit.</text>
</comment>
<comment type="subunit">
    <text evidence="1">Part of the 30S ribosomal subunit. Forms a tight heterodimer with protein bS6.</text>
</comment>
<comment type="similarity">
    <text evidence="1">Belongs to the bacterial ribosomal protein bS18 family.</text>
</comment>
<evidence type="ECO:0000255" key="1">
    <source>
        <dbReference type="HAMAP-Rule" id="MF_00270"/>
    </source>
</evidence>
<evidence type="ECO:0000305" key="2"/>
<sequence>MARYFRRRKFCRFTAEGVVEIDYKDIATLKNYITESGKIVPSRITGTRAKYQRQLARAIKRARYLSLLPYTDRHQ</sequence>
<feature type="chain" id="PRO_1000204733" description="Small ribosomal subunit protein bS18">
    <location>
        <begin position="1"/>
        <end position="75"/>
    </location>
</feature>
<protein>
    <recommendedName>
        <fullName evidence="1">Small ribosomal subunit protein bS18</fullName>
    </recommendedName>
    <alternativeName>
        <fullName evidence="2">30S ribosomal protein S18</fullName>
    </alternativeName>
</protein>
<organism>
    <name type="scientific">Pectobacterium carotovorum subsp. carotovorum (strain PC1)</name>
    <dbReference type="NCBI Taxonomy" id="561230"/>
    <lineage>
        <taxon>Bacteria</taxon>
        <taxon>Pseudomonadati</taxon>
        <taxon>Pseudomonadota</taxon>
        <taxon>Gammaproteobacteria</taxon>
        <taxon>Enterobacterales</taxon>
        <taxon>Pectobacteriaceae</taxon>
        <taxon>Pectobacterium</taxon>
    </lineage>
</organism>
<keyword id="KW-0687">Ribonucleoprotein</keyword>
<keyword id="KW-0689">Ribosomal protein</keyword>
<keyword id="KW-0694">RNA-binding</keyword>
<keyword id="KW-0699">rRNA-binding</keyword>
<name>RS18_PECCP</name>
<dbReference type="EMBL" id="CP001657">
    <property type="protein sequence ID" value="ACT14449.1"/>
    <property type="molecule type" value="Genomic_DNA"/>
</dbReference>
<dbReference type="RefSeq" id="WP_005974788.1">
    <property type="nucleotide sequence ID" value="NC_012917.1"/>
</dbReference>
<dbReference type="SMR" id="C6DE13"/>
<dbReference type="STRING" id="561230.PC1_3433"/>
<dbReference type="GeneID" id="93391599"/>
<dbReference type="KEGG" id="pct:PC1_3433"/>
<dbReference type="eggNOG" id="COG0238">
    <property type="taxonomic scope" value="Bacteria"/>
</dbReference>
<dbReference type="HOGENOM" id="CLU_148710_2_2_6"/>
<dbReference type="OrthoDB" id="9812008at2"/>
<dbReference type="Proteomes" id="UP000002736">
    <property type="component" value="Chromosome"/>
</dbReference>
<dbReference type="GO" id="GO:0022627">
    <property type="term" value="C:cytosolic small ribosomal subunit"/>
    <property type="evidence" value="ECO:0007669"/>
    <property type="project" value="TreeGrafter"/>
</dbReference>
<dbReference type="GO" id="GO:0070181">
    <property type="term" value="F:small ribosomal subunit rRNA binding"/>
    <property type="evidence" value="ECO:0007669"/>
    <property type="project" value="TreeGrafter"/>
</dbReference>
<dbReference type="GO" id="GO:0003735">
    <property type="term" value="F:structural constituent of ribosome"/>
    <property type="evidence" value="ECO:0007669"/>
    <property type="project" value="InterPro"/>
</dbReference>
<dbReference type="GO" id="GO:0006412">
    <property type="term" value="P:translation"/>
    <property type="evidence" value="ECO:0007669"/>
    <property type="project" value="UniProtKB-UniRule"/>
</dbReference>
<dbReference type="FunFam" id="4.10.640.10:FF:000001">
    <property type="entry name" value="30S ribosomal protein S18"/>
    <property type="match status" value="1"/>
</dbReference>
<dbReference type="Gene3D" id="4.10.640.10">
    <property type="entry name" value="Ribosomal protein S18"/>
    <property type="match status" value="1"/>
</dbReference>
<dbReference type="HAMAP" id="MF_00270">
    <property type="entry name" value="Ribosomal_bS18"/>
    <property type="match status" value="1"/>
</dbReference>
<dbReference type="InterPro" id="IPR001648">
    <property type="entry name" value="Ribosomal_bS18"/>
</dbReference>
<dbReference type="InterPro" id="IPR018275">
    <property type="entry name" value="Ribosomal_bS18_CS"/>
</dbReference>
<dbReference type="InterPro" id="IPR036870">
    <property type="entry name" value="Ribosomal_bS18_sf"/>
</dbReference>
<dbReference type="NCBIfam" id="TIGR00165">
    <property type="entry name" value="S18"/>
    <property type="match status" value="1"/>
</dbReference>
<dbReference type="PANTHER" id="PTHR13479">
    <property type="entry name" value="30S RIBOSOMAL PROTEIN S18"/>
    <property type="match status" value="1"/>
</dbReference>
<dbReference type="PANTHER" id="PTHR13479:SF40">
    <property type="entry name" value="SMALL RIBOSOMAL SUBUNIT PROTEIN BS18M"/>
    <property type="match status" value="1"/>
</dbReference>
<dbReference type="Pfam" id="PF01084">
    <property type="entry name" value="Ribosomal_S18"/>
    <property type="match status" value="1"/>
</dbReference>
<dbReference type="PRINTS" id="PR00974">
    <property type="entry name" value="RIBOSOMALS18"/>
</dbReference>
<dbReference type="SUPFAM" id="SSF46911">
    <property type="entry name" value="Ribosomal protein S18"/>
    <property type="match status" value="1"/>
</dbReference>
<dbReference type="PROSITE" id="PS00057">
    <property type="entry name" value="RIBOSOMAL_S18"/>
    <property type="match status" value="1"/>
</dbReference>
<proteinExistence type="inferred from homology"/>